<gene>
    <name type="ordered locus">BC_4596</name>
</gene>
<feature type="chain" id="PRO_0000388825" description="UPF0756 membrane protein BC_4596">
    <location>
        <begin position="1"/>
        <end position="153"/>
    </location>
</feature>
<feature type="transmembrane region" description="Helical" evidence="1">
    <location>
        <begin position="8"/>
        <end position="28"/>
    </location>
</feature>
<feature type="transmembrane region" description="Helical" evidence="1">
    <location>
        <begin position="54"/>
        <end position="74"/>
    </location>
</feature>
<feature type="transmembrane region" description="Helical" evidence="1">
    <location>
        <begin position="87"/>
        <end position="107"/>
    </location>
</feature>
<feature type="transmembrane region" description="Helical" evidence="1">
    <location>
        <begin position="117"/>
        <end position="137"/>
    </location>
</feature>
<evidence type="ECO:0000255" key="1">
    <source>
        <dbReference type="HAMAP-Rule" id="MF_01874"/>
    </source>
</evidence>
<accession>Q812P5</accession>
<proteinExistence type="inferred from homology"/>
<dbReference type="EMBL" id="AE016877">
    <property type="protein sequence ID" value="AAP11503.1"/>
    <property type="molecule type" value="Genomic_DNA"/>
</dbReference>
<dbReference type="RefSeq" id="NP_834302.1">
    <property type="nucleotide sequence ID" value="NC_004722.1"/>
</dbReference>
<dbReference type="RefSeq" id="WP_000625507.1">
    <property type="nucleotide sequence ID" value="NZ_CP138336.1"/>
</dbReference>
<dbReference type="KEGG" id="bce:BC4596"/>
<dbReference type="PATRIC" id="fig|226900.8.peg.4757"/>
<dbReference type="HOGENOM" id="CLU_125889_1_0_9"/>
<dbReference type="OrthoDB" id="80306at2"/>
<dbReference type="PRO" id="PR:Q812P5"/>
<dbReference type="Proteomes" id="UP000001417">
    <property type="component" value="Chromosome"/>
</dbReference>
<dbReference type="GO" id="GO:0005886">
    <property type="term" value="C:plasma membrane"/>
    <property type="evidence" value="ECO:0000318"/>
    <property type="project" value="GO_Central"/>
</dbReference>
<dbReference type="HAMAP" id="MF_01874">
    <property type="entry name" value="UPF0756"/>
    <property type="match status" value="1"/>
</dbReference>
<dbReference type="InterPro" id="IPR007382">
    <property type="entry name" value="UPF0756_TM"/>
</dbReference>
<dbReference type="PANTHER" id="PTHR38452">
    <property type="entry name" value="UPF0756 MEMBRANE PROTEIN YEAL"/>
    <property type="match status" value="1"/>
</dbReference>
<dbReference type="PANTHER" id="PTHR38452:SF1">
    <property type="entry name" value="UPF0756 MEMBRANE PROTEIN YEAL"/>
    <property type="match status" value="1"/>
</dbReference>
<dbReference type="Pfam" id="PF04284">
    <property type="entry name" value="DUF441"/>
    <property type="match status" value="1"/>
</dbReference>
<sequence length="153" mass="15998">MISQSTLFLFILLIIGLIAKNQSLTVAIGVLFLLKFTFLGDKVFPYLQTKGINLGVTVITIAVLVPIATGEIGFKQLGEAAKSYYAWIALASGVAVALLAKGGVQLLTTDPHITTALVFGTIIAVALFNGVAVGPLIGAGIAYAVMSIIQMFK</sequence>
<name>Y4596_BACCR</name>
<keyword id="KW-1003">Cell membrane</keyword>
<keyword id="KW-0472">Membrane</keyword>
<keyword id="KW-1185">Reference proteome</keyword>
<keyword id="KW-0812">Transmembrane</keyword>
<keyword id="KW-1133">Transmembrane helix</keyword>
<protein>
    <recommendedName>
        <fullName evidence="1">UPF0756 membrane protein BC_4596</fullName>
    </recommendedName>
</protein>
<comment type="subcellular location">
    <subcellularLocation>
        <location evidence="1">Cell membrane</location>
        <topology evidence="1">Multi-pass membrane protein</topology>
    </subcellularLocation>
</comment>
<comment type="similarity">
    <text evidence="1">Belongs to the UPF0756 family.</text>
</comment>
<reference key="1">
    <citation type="journal article" date="2003" name="Nature">
        <title>Genome sequence of Bacillus cereus and comparative analysis with Bacillus anthracis.</title>
        <authorList>
            <person name="Ivanova N."/>
            <person name="Sorokin A."/>
            <person name="Anderson I."/>
            <person name="Galleron N."/>
            <person name="Candelon B."/>
            <person name="Kapatral V."/>
            <person name="Bhattacharyya A."/>
            <person name="Reznik G."/>
            <person name="Mikhailova N."/>
            <person name="Lapidus A."/>
            <person name="Chu L."/>
            <person name="Mazur M."/>
            <person name="Goltsman E."/>
            <person name="Larsen N."/>
            <person name="D'Souza M."/>
            <person name="Walunas T."/>
            <person name="Grechkin Y."/>
            <person name="Pusch G."/>
            <person name="Haselkorn R."/>
            <person name="Fonstein M."/>
            <person name="Ehrlich S.D."/>
            <person name="Overbeek R."/>
            <person name="Kyrpides N.C."/>
        </authorList>
    </citation>
    <scope>NUCLEOTIDE SEQUENCE [LARGE SCALE GENOMIC DNA]</scope>
    <source>
        <strain>ATCC 14579 / DSM 31 / CCUG 7414 / JCM 2152 / NBRC 15305 / NCIMB 9373 / NCTC 2599 / NRRL B-3711</strain>
    </source>
</reference>
<organism>
    <name type="scientific">Bacillus cereus (strain ATCC 14579 / DSM 31 / CCUG 7414 / JCM 2152 / NBRC 15305 / NCIMB 9373 / NCTC 2599 / NRRL B-3711)</name>
    <dbReference type="NCBI Taxonomy" id="226900"/>
    <lineage>
        <taxon>Bacteria</taxon>
        <taxon>Bacillati</taxon>
        <taxon>Bacillota</taxon>
        <taxon>Bacilli</taxon>
        <taxon>Bacillales</taxon>
        <taxon>Bacillaceae</taxon>
        <taxon>Bacillus</taxon>
        <taxon>Bacillus cereus group</taxon>
    </lineage>
</organism>